<reference key="1">
    <citation type="journal article" date="1997" name="Mol. Biol. Cell">
        <title>An unusual fibrillarin gene and protein: structure and functional implications.</title>
        <authorList>
            <person name="David E."/>
            <person name="McNeil J.B."/>
            <person name="Basile V."/>
            <person name="Pearlman R.E."/>
        </authorList>
    </citation>
    <scope>NUCLEOTIDE SEQUENCE [MRNA]</scope>
</reference>
<gene>
    <name type="primary">FIB</name>
</gene>
<evidence type="ECO:0000250" key="1"/>
<evidence type="ECO:0000256" key="2">
    <source>
        <dbReference type="SAM" id="MobiDB-lite"/>
    </source>
</evidence>
<evidence type="ECO:0000305" key="3"/>
<protein>
    <recommendedName>
        <fullName>rRNA 2'-O-methyltransferase fibrillarin</fullName>
        <ecNumber>2.1.1.-</ecNumber>
    </recommendedName>
    <alternativeName>
        <fullName>Histone-glutamine methyltransferase</fullName>
    </alternativeName>
</protein>
<sequence>MGKDFKSGGGNAGGKPFNKGPGGPGGRPFNKGPGGPGGPGGKFGGGRPGGPGGKFGAKGPRGPKTIIVKHRLEGVFICKGQQEALVTKNFFPGESVYNEKRMSVEENGEKIEYRVWNPYRSKIAAAVVGGISDIHIKPGSKVLYLGGASGTTVSHVADIVGPTGVVYAVEFSHRSGRDLVNMAKKRTNVVPIIGDARKPQEYRFLVGMVDVVFADVAQPDQARIMGMNCQYFLKNGGHFLISIKACCIDSTNEPAVVFAAEVQKLKEEGLKPEQQLTLEPYERDHAMVLGSYRA</sequence>
<dbReference type="EC" id="2.1.1.-"/>
<dbReference type="EMBL" id="X77962">
    <property type="protein sequence ID" value="CAA54924.2"/>
    <property type="molecule type" value="mRNA"/>
</dbReference>
<dbReference type="SMR" id="Q27200"/>
<dbReference type="OMA" id="WNPNKSK"/>
<dbReference type="GO" id="GO:0031428">
    <property type="term" value="C:box C/D methylation guide snoRNP complex"/>
    <property type="evidence" value="ECO:0007669"/>
    <property type="project" value="TreeGrafter"/>
</dbReference>
<dbReference type="GO" id="GO:0005730">
    <property type="term" value="C:nucleolus"/>
    <property type="evidence" value="ECO:0007669"/>
    <property type="project" value="UniProtKB-SubCell"/>
</dbReference>
<dbReference type="GO" id="GO:0032040">
    <property type="term" value="C:small-subunit processome"/>
    <property type="evidence" value="ECO:0007669"/>
    <property type="project" value="TreeGrafter"/>
</dbReference>
<dbReference type="GO" id="GO:1990259">
    <property type="term" value="F:histone H2AQ104 methyltransferase activity"/>
    <property type="evidence" value="ECO:0007669"/>
    <property type="project" value="TreeGrafter"/>
</dbReference>
<dbReference type="GO" id="GO:0003723">
    <property type="term" value="F:RNA binding"/>
    <property type="evidence" value="ECO:0007669"/>
    <property type="project" value="UniProtKB-KW"/>
</dbReference>
<dbReference type="GO" id="GO:0008649">
    <property type="term" value="F:rRNA methyltransferase activity"/>
    <property type="evidence" value="ECO:0007669"/>
    <property type="project" value="TreeGrafter"/>
</dbReference>
<dbReference type="GO" id="GO:0000494">
    <property type="term" value="P:box C/D sno(s)RNA 3'-end processing"/>
    <property type="evidence" value="ECO:0007669"/>
    <property type="project" value="TreeGrafter"/>
</dbReference>
<dbReference type="CDD" id="cd02440">
    <property type="entry name" value="AdoMet_MTases"/>
    <property type="match status" value="1"/>
</dbReference>
<dbReference type="FunFam" id="3.40.50.150:FF:000001">
    <property type="entry name" value="Fibrillarin like 1"/>
    <property type="match status" value="1"/>
</dbReference>
<dbReference type="FunFam" id="3.30.200.20:FF:000386">
    <property type="entry name" value="Fibrillarin, putative"/>
    <property type="match status" value="1"/>
</dbReference>
<dbReference type="Gene3D" id="3.30.200.20">
    <property type="entry name" value="Phosphorylase Kinase, domain 1"/>
    <property type="match status" value="1"/>
</dbReference>
<dbReference type="Gene3D" id="3.40.50.150">
    <property type="entry name" value="Vaccinia Virus protein VP39"/>
    <property type="match status" value="1"/>
</dbReference>
<dbReference type="HAMAP" id="MF_00351">
    <property type="entry name" value="RNA_methyltransf_FlpA"/>
    <property type="match status" value="1"/>
</dbReference>
<dbReference type="InterPro" id="IPR000692">
    <property type="entry name" value="Fibrillarin"/>
</dbReference>
<dbReference type="InterPro" id="IPR020813">
    <property type="entry name" value="Fibrillarin_CS"/>
</dbReference>
<dbReference type="InterPro" id="IPR029063">
    <property type="entry name" value="SAM-dependent_MTases_sf"/>
</dbReference>
<dbReference type="NCBIfam" id="NF003276">
    <property type="entry name" value="PRK04266.1-2"/>
    <property type="match status" value="1"/>
</dbReference>
<dbReference type="PANTHER" id="PTHR10335:SF17">
    <property type="entry name" value="FIBRILLARIN"/>
    <property type="match status" value="1"/>
</dbReference>
<dbReference type="PANTHER" id="PTHR10335">
    <property type="entry name" value="RRNA 2-O-METHYLTRANSFERASE FIBRILLARIN"/>
    <property type="match status" value="1"/>
</dbReference>
<dbReference type="Pfam" id="PF01269">
    <property type="entry name" value="Fibrillarin"/>
    <property type="match status" value="1"/>
</dbReference>
<dbReference type="PIRSF" id="PIRSF006540">
    <property type="entry name" value="Nop17p"/>
    <property type="match status" value="1"/>
</dbReference>
<dbReference type="PRINTS" id="PR00052">
    <property type="entry name" value="FIBRILLARIN"/>
</dbReference>
<dbReference type="SMART" id="SM01206">
    <property type="entry name" value="Fibrillarin"/>
    <property type="match status" value="1"/>
</dbReference>
<dbReference type="SUPFAM" id="SSF53335">
    <property type="entry name" value="S-adenosyl-L-methionine-dependent methyltransferases"/>
    <property type="match status" value="1"/>
</dbReference>
<dbReference type="PROSITE" id="PS00566">
    <property type="entry name" value="FIBRILLARIN"/>
    <property type="match status" value="1"/>
</dbReference>
<name>FBRL_TETTH</name>
<proteinExistence type="evidence at transcript level"/>
<organism>
    <name type="scientific">Tetrahymena thermophila</name>
    <dbReference type="NCBI Taxonomy" id="5911"/>
    <lineage>
        <taxon>Eukaryota</taxon>
        <taxon>Sar</taxon>
        <taxon>Alveolata</taxon>
        <taxon>Ciliophora</taxon>
        <taxon>Intramacronucleata</taxon>
        <taxon>Oligohymenophorea</taxon>
        <taxon>Hymenostomatida</taxon>
        <taxon>Tetrahymenina</taxon>
        <taxon>Tetrahymenidae</taxon>
        <taxon>Tetrahymena</taxon>
    </lineage>
</organism>
<comment type="function">
    <text evidence="1">S-adenosyl-L-methionine-dependent methyltransferase that has the ability to methylate both RNAs and proteins. Involved in pre-rRNA processing. Utilizes the methyl donor S-adenosyl-L-methionine to catalyze the site-specific 2'-hydroxyl methylation of ribose moieties in pre-ribosomal RNA. Site specificity is provided by a guide RNA that base pairs with the substrate. Methylation occurs at a characteristic distance from the sequence involved in base pairing with the guide RNA. Also acts as a protein methyltransferase by mediating methylation of 'Gln-105' of histone H2A (H2AQ105me), a modification that impairs binding of the FACT complex and is specifically present at 35S ribosomal DNA locus (By similarity).</text>
</comment>
<comment type="catalytic activity">
    <reaction>
        <text>L-glutaminyl-[histone H2A] + S-adenosyl-L-methionine = N(5)-methyl-L-glutaminyl-[histone H2A] + S-adenosyl-L-homocysteine + H(+)</text>
        <dbReference type="Rhea" id="RHEA:50904"/>
        <dbReference type="Rhea" id="RHEA-COMP:12837"/>
        <dbReference type="Rhea" id="RHEA-COMP:12839"/>
        <dbReference type="ChEBI" id="CHEBI:15378"/>
        <dbReference type="ChEBI" id="CHEBI:30011"/>
        <dbReference type="ChEBI" id="CHEBI:57856"/>
        <dbReference type="ChEBI" id="CHEBI:59789"/>
        <dbReference type="ChEBI" id="CHEBI:61891"/>
    </reaction>
</comment>
<comment type="subunit">
    <text evidence="1">Component of box C/D small nucleolar ribonucleoprotein (snoRNP) particles. It is associated with the U3, U8 and U13 small nuclear RNAs.</text>
</comment>
<comment type="subcellular location">
    <subcellularLocation>
        <location>Nucleus</location>
        <location>Nucleolus</location>
    </subcellularLocation>
    <text>Fibrillar region of the nucleolus.</text>
</comment>
<comment type="PTM">
    <text>By homology to other fibrillarins, some or all of the N-terminal domain arginines are modified to asymmetric dimethylarginine (DMA).</text>
</comment>
<comment type="similarity">
    <text evidence="3">Belongs to the methyltransferase superfamily. Fibrillarin family.</text>
</comment>
<feature type="chain" id="PRO_0000148517" description="rRNA 2'-O-methyltransferase fibrillarin">
    <location>
        <begin position="1"/>
        <end position="294"/>
    </location>
</feature>
<feature type="region of interest" description="Disordered" evidence="2">
    <location>
        <begin position="1"/>
        <end position="62"/>
    </location>
</feature>
<feature type="compositionally biased region" description="Gly residues" evidence="2">
    <location>
        <begin position="20"/>
        <end position="56"/>
    </location>
</feature>
<feature type="binding site" evidence="1">
    <location>
        <begin position="151"/>
        <end position="152"/>
    </location>
    <ligand>
        <name>S-adenosyl-L-methionine</name>
        <dbReference type="ChEBI" id="CHEBI:59789"/>
    </ligand>
</feature>
<feature type="binding site" evidence="1">
    <location>
        <begin position="170"/>
        <end position="171"/>
    </location>
    <ligand>
        <name>S-adenosyl-L-methionine</name>
        <dbReference type="ChEBI" id="CHEBI:59789"/>
    </ligand>
</feature>
<feature type="binding site" evidence="1">
    <location>
        <begin position="195"/>
        <end position="196"/>
    </location>
    <ligand>
        <name>S-adenosyl-L-methionine</name>
        <dbReference type="ChEBI" id="CHEBI:59789"/>
    </ligand>
</feature>
<feature type="binding site" evidence="1">
    <location>
        <begin position="215"/>
        <end position="218"/>
    </location>
    <ligand>
        <name>S-adenosyl-L-methionine</name>
        <dbReference type="ChEBI" id="CHEBI:59789"/>
    </ligand>
</feature>
<feature type="modified residue" description="Asymmetric dimethylarginine" evidence="1">
    <location>
        <position position="27"/>
    </location>
</feature>
<feature type="modified residue" description="Asymmetric dimethylarginine" evidence="1">
    <location>
        <position position="47"/>
    </location>
</feature>
<feature type="modified residue" description="Asymmetric dimethylarginine" evidence="1">
    <location>
        <position position="61"/>
    </location>
</feature>
<accession>Q27200</accession>
<keyword id="KW-0488">Methylation</keyword>
<keyword id="KW-0489">Methyltransferase</keyword>
<keyword id="KW-0539">Nucleus</keyword>
<keyword id="KW-0687">Ribonucleoprotein</keyword>
<keyword id="KW-0694">RNA-binding</keyword>
<keyword id="KW-0698">rRNA processing</keyword>
<keyword id="KW-0949">S-adenosyl-L-methionine</keyword>
<keyword id="KW-0808">Transferase</keyword>